<name>KGUA_SYNC1</name>
<reference key="1">
    <citation type="submission" date="2005-10" db="EMBL/GenBank/DDBJ databases">
        <title>Complete sequence of Pelobacter carbinolicus DSM 2380.</title>
        <authorList>
            <person name="Copeland A."/>
            <person name="Lucas S."/>
            <person name="Lapidus A."/>
            <person name="Barry K."/>
            <person name="Detter J.C."/>
            <person name="Glavina T."/>
            <person name="Hammon N."/>
            <person name="Israni S."/>
            <person name="Pitluck S."/>
            <person name="Chertkov O."/>
            <person name="Schmutz J."/>
            <person name="Larimer F."/>
            <person name="Land M."/>
            <person name="Kyrpides N."/>
            <person name="Ivanova N."/>
            <person name="Richardson P."/>
        </authorList>
    </citation>
    <scope>NUCLEOTIDE SEQUENCE [LARGE SCALE GENOMIC DNA]</scope>
    <source>
        <strain>DSM 2380 / NBRC 103641 / GraBd1</strain>
    </source>
</reference>
<accession>Q3A523</accession>
<keyword id="KW-0067">ATP-binding</keyword>
<keyword id="KW-0963">Cytoplasm</keyword>
<keyword id="KW-0418">Kinase</keyword>
<keyword id="KW-0547">Nucleotide-binding</keyword>
<keyword id="KW-1185">Reference proteome</keyword>
<keyword id="KW-0808">Transferase</keyword>
<protein>
    <recommendedName>
        <fullName evidence="1">Guanylate kinase</fullName>
        <ecNumber evidence="1">2.7.4.8</ecNumber>
    </recommendedName>
    <alternativeName>
        <fullName evidence="1">GMP kinase</fullName>
    </alternativeName>
</protein>
<organism>
    <name type="scientific">Syntrophotalea carbinolica (strain DSM 2380 / NBRC 103641 / GraBd1)</name>
    <name type="common">Pelobacter carbinolicus</name>
    <dbReference type="NCBI Taxonomy" id="338963"/>
    <lineage>
        <taxon>Bacteria</taxon>
        <taxon>Pseudomonadati</taxon>
        <taxon>Thermodesulfobacteriota</taxon>
        <taxon>Desulfuromonadia</taxon>
        <taxon>Desulfuromonadales</taxon>
        <taxon>Syntrophotaleaceae</taxon>
        <taxon>Syntrophotalea</taxon>
    </lineage>
</organism>
<sequence>MKRNGILFVISAPSGAGKTSLCRQIVDIFPDMRHSISFTTRPRRNGETDGVDYHFVTPEVFDTMVAEGAFAEWARVHGNCYGTALATLQEAREQGQDLLLDIDCQGAAQLKRNCPDDVFIFILPPSFEELERRLRGRNTDTAEVIARRLDNARREIRELVWYDYLIVNEDLPRAVEEFKSIILAEGCRASRIRSEAGRLFDIDMQDNSTI</sequence>
<gene>
    <name evidence="1" type="primary">gmk</name>
    <name type="ordered locus">Pcar_1285</name>
</gene>
<comment type="function">
    <text evidence="1">Essential for recycling GMP and indirectly, cGMP.</text>
</comment>
<comment type="catalytic activity">
    <reaction evidence="1">
        <text>GMP + ATP = GDP + ADP</text>
        <dbReference type="Rhea" id="RHEA:20780"/>
        <dbReference type="ChEBI" id="CHEBI:30616"/>
        <dbReference type="ChEBI" id="CHEBI:58115"/>
        <dbReference type="ChEBI" id="CHEBI:58189"/>
        <dbReference type="ChEBI" id="CHEBI:456216"/>
        <dbReference type="EC" id="2.7.4.8"/>
    </reaction>
</comment>
<comment type="subcellular location">
    <subcellularLocation>
        <location evidence="1">Cytoplasm</location>
    </subcellularLocation>
</comment>
<comment type="similarity">
    <text evidence="1">Belongs to the guanylate kinase family.</text>
</comment>
<proteinExistence type="inferred from homology"/>
<evidence type="ECO:0000255" key="1">
    <source>
        <dbReference type="HAMAP-Rule" id="MF_00328"/>
    </source>
</evidence>
<dbReference type="EC" id="2.7.4.8" evidence="1"/>
<dbReference type="EMBL" id="CP000142">
    <property type="protein sequence ID" value="ABA88534.1"/>
    <property type="molecule type" value="Genomic_DNA"/>
</dbReference>
<dbReference type="RefSeq" id="WP_011341009.1">
    <property type="nucleotide sequence ID" value="NC_007498.2"/>
</dbReference>
<dbReference type="SMR" id="Q3A523"/>
<dbReference type="STRING" id="338963.Pcar_1285"/>
<dbReference type="KEGG" id="pca:Pcar_1285"/>
<dbReference type="eggNOG" id="COG0194">
    <property type="taxonomic scope" value="Bacteria"/>
</dbReference>
<dbReference type="HOGENOM" id="CLU_001715_1_2_7"/>
<dbReference type="OrthoDB" id="9808150at2"/>
<dbReference type="Proteomes" id="UP000002534">
    <property type="component" value="Chromosome"/>
</dbReference>
<dbReference type="GO" id="GO:0005829">
    <property type="term" value="C:cytosol"/>
    <property type="evidence" value="ECO:0007669"/>
    <property type="project" value="TreeGrafter"/>
</dbReference>
<dbReference type="GO" id="GO:0005524">
    <property type="term" value="F:ATP binding"/>
    <property type="evidence" value="ECO:0007669"/>
    <property type="project" value="UniProtKB-UniRule"/>
</dbReference>
<dbReference type="GO" id="GO:0004385">
    <property type="term" value="F:guanylate kinase activity"/>
    <property type="evidence" value="ECO:0007669"/>
    <property type="project" value="UniProtKB-UniRule"/>
</dbReference>
<dbReference type="CDD" id="cd00071">
    <property type="entry name" value="GMPK"/>
    <property type="match status" value="1"/>
</dbReference>
<dbReference type="FunFam" id="3.30.63.10:FF:000002">
    <property type="entry name" value="Guanylate kinase 1"/>
    <property type="match status" value="1"/>
</dbReference>
<dbReference type="Gene3D" id="3.30.63.10">
    <property type="entry name" value="Guanylate Kinase phosphate binding domain"/>
    <property type="match status" value="1"/>
</dbReference>
<dbReference type="Gene3D" id="3.40.50.300">
    <property type="entry name" value="P-loop containing nucleotide triphosphate hydrolases"/>
    <property type="match status" value="1"/>
</dbReference>
<dbReference type="HAMAP" id="MF_00328">
    <property type="entry name" value="Guanylate_kinase"/>
    <property type="match status" value="1"/>
</dbReference>
<dbReference type="InterPro" id="IPR008145">
    <property type="entry name" value="GK/Ca_channel_bsu"/>
</dbReference>
<dbReference type="InterPro" id="IPR008144">
    <property type="entry name" value="Guanylate_kin-like_dom"/>
</dbReference>
<dbReference type="InterPro" id="IPR017665">
    <property type="entry name" value="Guanylate_kinase"/>
</dbReference>
<dbReference type="InterPro" id="IPR020590">
    <property type="entry name" value="Guanylate_kinase_CS"/>
</dbReference>
<dbReference type="InterPro" id="IPR027417">
    <property type="entry name" value="P-loop_NTPase"/>
</dbReference>
<dbReference type="NCBIfam" id="TIGR03263">
    <property type="entry name" value="guanyl_kin"/>
    <property type="match status" value="1"/>
</dbReference>
<dbReference type="PANTHER" id="PTHR23117:SF13">
    <property type="entry name" value="GUANYLATE KINASE"/>
    <property type="match status" value="1"/>
</dbReference>
<dbReference type="PANTHER" id="PTHR23117">
    <property type="entry name" value="GUANYLATE KINASE-RELATED"/>
    <property type="match status" value="1"/>
</dbReference>
<dbReference type="Pfam" id="PF00625">
    <property type="entry name" value="Guanylate_kin"/>
    <property type="match status" value="1"/>
</dbReference>
<dbReference type="SMART" id="SM00072">
    <property type="entry name" value="GuKc"/>
    <property type="match status" value="1"/>
</dbReference>
<dbReference type="SUPFAM" id="SSF52540">
    <property type="entry name" value="P-loop containing nucleoside triphosphate hydrolases"/>
    <property type="match status" value="1"/>
</dbReference>
<dbReference type="PROSITE" id="PS00856">
    <property type="entry name" value="GUANYLATE_KINASE_1"/>
    <property type="match status" value="1"/>
</dbReference>
<dbReference type="PROSITE" id="PS50052">
    <property type="entry name" value="GUANYLATE_KINASE_2"/>
    <property type="match status" value="1"/>
</dbReference>
<feature type="chain" id="PRO_0000266364" description="Guanylate kinase">
    <location>
        <begin position="1"/>
        <end position="210"/>
    </location>
</feature>
<feature type="domain" description="Guanylate kinase-like" evidence="1">
    <location>
        <begin position="5"/>
        <end position="183"/>
    </location>
</feature>
<feature type="binding site" evidence="1">
    <location>
        <begin position="12"/>
        <end position="19"/>
    </location>
    <ligand>
        <name>ATP</name>
        <dbReference type="ChEBI" id="CHEBI:30616"/>
    </ligand>
</feature>